<keyword id="KW-0274">FAD</keyword>
<keyword id="KW-0285">Flavoprotein</keyword>
<keyword id="KW-0560">Oxidoreductase</keyword>
<name>DADA_ACIBY</name>
<protein>
    <recommendedName>
        <fullName evidence="1">D-amino acid dehydrogenase</fullName>
        <ecNumber evidence="1">1.4.99.-</ecNumber>
    </recommendedName>
</protein>
<proteinExistence type="inferred from homology"/>
<feature type="chain" id="PRO_1000138638" description="D-amino acid dehydrogenase">
    <location>
        <begin position="1"/>
        <end position="421"/>
    </location>
</feature>
<feature type="binding site" evidence="1">
    <location>
        <begin position="3"/>
        <end position="17"/>
    </location>
    <ligand>
        <name>FAD</name>
        <dbReference type="ChEBI" id="CHEBI:57692"/>
    </ligand>
</feature>
<accession>B0V6N4</accession>
<dbReference type="EC" id="1.4.99.-" evidence="1"/>
<dbReference type="EMBL" id="CU459141">
    <property type="protein sequence ID" value="CAM88535.1"/>
    <property type="molecule type" value="Genomic_DNA"/>
</dbReference>
<dbReference type="RefSeq" id="WP_001263980.1">
    <property type="nucleotide sequence ID" value="NZ_JBDGFB010000006.1"/>
</dbReference>
<dbReference type="SMR" id="B0V6N4"/>
<dbReference type="EnsemblBacteria" id="CAM88535">
    <property type="protein sequence ID" value="CAM88535"/>
    <property type="gene ID" value="ABAYE3774"/>
</dbReference>
<dbReference type="KEGG" id="aby:ABAYE3774"/>
<dbReference type="HOGENOM" id="CLU_007884_9_2_6"/>
<dbReference type="UniPathway" id="UPA00043">
    <property type="reaction ID" value="UER00498"/>
</dbReference>
<dbReference type="GO" id="GO:0005737">
    <property type="term" value="C:cytoplasm"/>
    <property type="evidence" value="ECO:0007669"/>
    <property type="project" value="TreeGrafter"/>
</dbReference>
<dbReference type="GO" id="GO:0005886">
    <property type="term" value="C:plasma membrane"/>
    <property type="evidence" value="ECO:0007669"/>
    <property type="project" value="TreeGrafter"/>
</dbReference>
<dbReference type="GO" id="GO:0008718">
    <property type="term" value="F:D-amino-acid dehydrogenase activity"/>
    <property type="evidence" value="ECO:0007669"/>
    <property type="project" value="UniProtKB-UniRule"/>
</dbReference>
<dbReference type="GO" id="GO:0055130">
    <property type="term" value="P:D-alanine catabolic process"/>
    <property type="evidence" value="ECO:0007669"/>
    <property type="project" value="UniProtKB-UniPathway"/>
</dbReference>
<dbReference type="FunFam" id="3.50.50.60:FF:000020">
    <property type="entry name" value="D-amino acid dehydrogenase"/>
    <property type="match status" value="1"/>
</dbReference>
<dbReference type="Gene3D" id="3.30.9.10">
    <property type="entry name" value="D-Amino Acid Oxidase, subunit A, domain 2"/>
    <property type="match status" value="1"/>
</dbReference>
<dbReference type="Gene3D" id="3.50.50.60">
    <property type="entry name" value="FAD/NAD(P)-binding domain"/>
    <property type="match status" value="2"/>
</dbReference>
<dbReference type="HAMAP" id="MF_01202">
    <property type="entry name" value="DadA"/>
    <property type="match status" value="1"/>
</dbReference>
<dbReference type="InterPro" id="IPR023080">
    <property type="entry name" value="DadA"/>
</dbReference>
<dbReference type="InterPro" id="IPR006076">
    <property type="entry name" value="FAD-dep_OxRdtase"/>
</dbReference>
<dbReference type="InterPro" id="IPR036188">
    <property type="entry name" value="FAD/NAD-bd_sf"/>
</dbReference>
<dbReference type="NCBIfam" id="NF001933">
    <property type="entry name" value="PRK00711.1"/>
    <property type="match status" value="1"/>
</dbReference>
<dbReference type="PANTHER" id="PTHR13847:SF280">
    <property type="entry name" value="D-AMINO ACID DEHYDROGENASE"/>
    <property type="match status" value="1"/>
</dbReference>
<dbReference type="PANTHER" id="PTHR13847">
    <property type="entry name" value="SARCOSINE DEHYDROGENASE-RELATED"/>
    <property type="match status" value="1"/>
</dbReference>
<dbReference type="Pfam" id="PF01266">
    <property type="entry name" value="DAO"/>
    <property type="match status" value="1"/>
</dbReference>
<dbReference type="SUPFAM" id="SSF54373">
    <property type="entry name" value="FAD-linked reductases, C-terminal domain"/>
    <property type="match status" value="1"/>
</dbReference>
<dbReference type="SUPFAM" id="SSF51905">
    <property type="entry name" value="FAD/NAD(P)-binding domain"/>
    <property type="match status" value="1"/>
</dbReference>
<gene>
    <name evidence="1" type="primary">dadA</name>
    <name type="ordered locus">ABAYE3774</name>
</gene>
<evidence type="ECO:0000255" key="1">
    <source>
        <dbReference type="HAMAP-Rule" id="MF_01202"/>
    </source>
</evidence>
<reference key="1">
    <citation type="journal article" date="2008" name="PLoS ONE">
        <title>Comparative analysis of Acinetobacters: three genomes for three lifestyles.</title>
        <authorList>
            <person name="Vallenet D."/>
            <person name="Nordmann P."/>
            <person name="Barbe V."/>
            <person name="Poirel L."/>
            <person name="Mangenot S."/>
            <person name="Bataille E."/>
            <person name="Dossat C."/>
            <person name="Gas S."/>
            <person name="Kreimeyer A."/>
            <person name="Lenoble P."/>
            <person name="Oztas S."/>
            <person name="Poulain J."/>
            <person name="Segurens B."/>
            <person name="Robert C."/>
            <person name="Abergel C."/>
            <person name="Claverie J.-M."/>
            <person name="Raoult D."/>
            <person name="Medigue C."/>
            <person name="Weissenbach J."/>
            <person name="Cruveiller S."/>
        </authorList>
    </citation>
    <scope>NUCLEOTIDE SEQUENCE [LARGE SCALE GENOMIC DNA]</scope>
    <source>
        <strain>AYE</strain>
    </source>
</reference>
<sequence>MRVIVLGSGVIGVASAYYLARQGAEVTVLDRQSGPAEETSFGNAGQISPGYSTPWAAPGIPFKAVKWMFQHHAPLAINLDGSMWQLQWMAQMLKNCNPQSYAVNKERMMRVAEYSRDCLRELRKDTGIHYENRAKGTLQLFRKEAQMEAVQRDISVLEECGVSYELLNGNELGRVEPALANAQDKLVGGLHLPNDETGDCYLFTNALAQIAKELGVNFQFNQNVEKLIVEGDQIKGVQVNGKVLTADRYVLAFGSYSRDFLKPLDLQLPVYPVKGYSLTIPIVDPAFAPQSTVLDETYKIAITRFDQRIRVGGMAELSGFNLGLNEDRRATLQMVTQDLFPGGDMAQASFWTGLRPMTPDSTPIIGATRFKNLFLNTGHGTLGWTMACGSGKLISDIVLNHKTDISTDGLSIQRYSHAHAA</sequence>
<comment type="function">
    <text evidence="1">Oxidative deamination of D-amino acids.</text>
</comment>
<comment type="catalytic activity">
    <reaction evidence="1">
        <text>a D-alpha-amino acid + A + H2O = a 2-oxocarboxylate + AH2 + NH4(+)</text>
        <dbReference type="Rhea" id="RHEA:18125"/>
        <dbReference type="ChEBI" id="CHEBI:13193"/>
        <dbReference type="ChEBI" id="CHEBI:15377"/>
        <dbReference type="ChEBI" id="CHEBI:17499"/>
        <dbReference type="ChEBI" id="CHEBI:28938"/>
        <dbReference type="ChEBI" id="CHEBI:35179"/>
        <dbReference type="ChEBI" id="CHEBI:59871"/>
    </reaction>
</comment>
<comment type="cofactor">
    <cofactor evidence="1">
        <name>FAD</name>
        <dbReference type="ChEBI" id="CHEBI:57692"/>
    </cofactor>
</comment>
<comment type="pathway">
    <text>Amino-acid degradation; D-alanine degradation; NH(3) and pyruvate from D-alanine: step 1/1.</text>
</comment>
<comment type="similarity">
    <text evidence="1">Belongs to the DadA oxidoreductase family.</text>
</comment>
<organism>
    <name type="scientific">Acinetobacter baumannii (strain AYE)</name>
    <dbReference type="NCBI Taxonomy" id="509173"/>
    <lineage>
        <taxon>Bacteria</taxon>
        <taxon>Pseudomonadati</taxon>
        <taxon>Pseudomonadota</taxon>
        <taxon>Gammaproteobacteria</taxon>
        <taxon>Moraxellales</taxon>
        <taxon>Moraxellaceae</taxon>
        <taxon>Acinetobacter</taxon>
        <taxon>Acinetobacter calcoaceticus/baumannii complex</taxon>
    </lineage>
</organism>